<comment type="function">
    <text>Relaxin is an ovarian hormone that acts with estrogen to produce dilatation of the birth canal in many mammals.</text>
</comment>
<comment type="subunit">
    <text>Heterodimer of a B chain and an A chain linked by two disulfide bonds.</text>
</comment>
<comment type="subcellular location">
    <subcellularLocation>
        <location>Secreted</location>
    </subcellularLocation>
</comment>
<comment type="similarity">
    <text evidence="2">Belongs to the insulin family.</text>
</comment>
<evidence type="ECO:0000269" key="1">
    <source>
    </source>
</evidence>
<evidence type="ECO:0000305" key="2"/>
<proteinExistence type="evidence at protein level"/>
<organism>
    <name type="scientific">Balaenoptera acutorostrata</name>
    <name type="common">Common minke whale</name>
    <name type="synonym">Balaena rostrata</name>
    <dbReference type="NCBI Taxonomy" id="9767"/>
    <lineage>
        <taxon>Eukaryota</taxon>
        <taxon>Metazoa</taxon>
        <taxon>Chordata</taxon>
        <taxon>Craniata</taxon>
        <taxon>Vertebrata</taxon>
        <taxon>Euteleostomi</taxon>
        <taxon>Mammalia</taxon>
        <taxon>Eutheria</taxon>
        <taxon>Laurasiatheria</taxon>
        <taxon>Artiodactyla</taxon>
        <taxon>Whippomorpha</taxon>
        <taxon>Cetacea</taxon>
        <taxon>Mysticeti</taxon>
        <taxon>Balaenopteridae</taxon>
        <taxon>Balaenoptera</taxon>
    </lineage>
</organism>
<protein>
    <recommendedName>
        <fullName>Relaxin</fullName>
    </recommendedName>
    <component>
        <recommendedName>
            <fullName>Relaxin B chain</fullName>
        </recommendedName>
    </component>
    <component>
        <recommendedName>
            <fullName>Relaxin A chain</fullName>
        </recommendedName>
    </component>
</protein>
<feature type="peptide" id="PRO_0000016063" description="Relaxin B chain">
    <location>
        <begin position="1"/>
        <end position="32"/>
    </location>
</feature>
<feature type="peptide" id="PRO_0000016064" description="Relaxin A chain">
    <location>
        <begin position="33"/>
        <end position="54"/>
    </location>
</feature>
<feature type="modified residue" description="Pyrrolidone carboxylic acid" evidence="1">
    <location>
        <position position="1"/>
    </location>
</feature>
<feature type="disulfide bond" description="Interchain (between B and A chains)">
    <location>
        <begin position="10"/>
        <end position="41"/>
    </location>
</feature>
<feature type="disulfide bond" description="Interchain (between B and A chains)">
    <location>
        <begin position="22"/>
        <end position="54"/>
    </location>
</feature>
<feature type="disulfide bond">
    <location>
        <begin position="40"/>
        <end position="45"/>
    </location>
</feature>
<feature type="non-consecutive residues" evidence="2">
    <location>
        <begin position="32"/>
        <end position="33"/>
    </location>
</feature>
<accession>P11184</accession>
<keyword id="KW-0165">Cleavage on pair of basic residues</keyword>
<keyword id="KW-0903">Direct protein sequencing</keyword>
<keyword id="KW-1015">Disulfide bond</keyword>
<keyword id="KW-0372">Hormone</keyword>
<keyword id="KW-0873">Pyrrolidone carboxylic acid</keyword>
<keyword id="KW-0964">Secreted</keyword>
<sequence>QSTNDLIKACGRELVRLWVEICGSVRWGQSALRMTLSEKCCQVGCIRKDIARLC</sequence>
<dbReference type="PIR" id="B32201">
    <property type="entry name" value="B32201"/>
</dbReference>
<dbReference type="GO" id="GO:0005576">
    <property type="term" value="C:extracellular region"/>
    <property type="evidence" value="ECO:0007669"/>
    <property type="project" value="UniProtKB-SubCell"/>
</dbReference>
<dbReference type="GO" id="GO:0005179">
    <property type="term" value="F:hormone activity"/>
    <property type="evidence" value="ECO:0007669"/>
    <property type="project" value="UniProtKB-KW"/>
</dbReference>
<dbReference type="CDD" id="cd04365">
    <property type="entry name" value="IlGF_relaxin_like"/>
    <property type="match status" value="1"/>
</dbReference>
<dbReference type="Gene3D" id="1.10.100.10">
    <property type="entry name" value="Insulin-like"/>
    <property type="match status" value="1"/>
</dbReference>
<dbReference type="InterPro" id="IPR016179">
    <property type="entry name" value="Insulin-like"/>
</dbReference>
<dbReference type="InterPro" id="IPR036438">
    <property type="entry name" value="Insulin-like_sf"/>
</dbReference>
<dbReference type="InterPro" id="IPR022353">
    <property type="entry name" value="Insulin_CS"/>
</dbReference>
<dbReference type="InterPro" id="IPR003235">
    <property type="entry name" value="Nem_insulin-like_b-type"/>
</dbReference>
<dbReference type="InterPro" id="IPR051042">
    <property type="entry name" value="Repro_Hormone_Insulin-like"/>
</dbReference>
<dbReference type="PANTHER" id="PTHR12004:SF13">
    <property type="entry name" value="PRORELAXIN H2"/>
    <property type="match status" value="1"/>
</dbReference>
<dbReference type="PANTHER" id="PTHR12004">
    <property type="entry name" value="RELAXIN"/>
    <property type="match status" value="1"/>
</dbReference>
<dbReference type="Pfam" id="PF03488">
    <property type="entry name" value="Ins_beta"/>
    <property type="match status" value="1"/>
</dbReference>
<dbReference type="SMART" id="SM00078">
    <property type="entry name" value="IlGF"/>
    <property type="match status" value="1"/>
</dbReference>
<dbReference type="SUPFAM" id="SSF56994">
    <property type="entry name" value="Insulin-like"/>
    <property type="match status" value="1"/>
</dbReference>
<dbReference type="PROSITE" id="PS00262">
    <property type="entry name" value="INSULIN"/>
    <property type="match status" value="1"/>
</dbReference>
<name>RELX_BALAC</name>
<reference key="1">
    <citation type="journal article" date="1989" name="J. Biol. Chem.">
        <title>Cetacean relaxin. Isolation and sequence of relaxins from Balaenoptera acutorostrata and Balaenoptera edeni.</title>
        <authorList>
            <person name="Schwabe C."/>
            <person name="Bullesbach E.E."/>
            <person name="Heyn H."/>
            <person name="Yoshioka M."/>
        </authorList>
    </citation>
    <scope>PROTEIN SEQUENCE</scope>
    <scope>PYROGLUTAMATE FORMATION AT GLN-1</scope>
</reference>